<evidence type="ECO:0000255" key="1">
    <source>
        <dbReference type="HAMAP-Rule" id="MF_04078"/>
    </source>
</evidence>
<evidence type="ECO:0000269" key="2">
    <source>
    </source>
</evidence>
<evidence type="ECO:0007829" key="3">
    <source>
        <dbReference type="PDB" id="1ZEC"/>
    </source>
</evidence>
<organismHost>
    <name type="scientific">Homo sapiens</name>
    <name type="common">Human</name>
    <dbReference type="NCBI Taxonomy" id="9606"/>
</organismHost>
<keyword id="KW-0002">3D-structure</keyword>
<keyword id="KW-0014">AIDS</keyword>
<keyword id="KW-0053">Apoptosis</keyword>
<keyword id="KW-0244">Early protein</keyword>
<keyword id="KW-1032">Host cell membrane</keyword>
<keyword id="KW-1040">Host Golgi apparatus</keyword>
<keyword id="KW-1043">Host membrane</keyword>
<keyword id="KW-0945">Host-virus interaction</keyword>
<keyword id="KW-1080">Inhibition of host adaptive immune response by virus</keyword>
<keyword id="KW-1083">Inhibition of host autophagy by virus</keyword>
<keyword id="KW-1115">Inhibition of host MHC class I molecule presentation by virus</keyword>
<keyword id="KW-1116">Inhibition of host MHC class II molecule presentation by virus</keyword>
<keyword id="KW-0449">Lipoprotein</keyword>
<keyword id="KW-0472">Membrane</keyword>
<keyword id="KW-0519">Myristate</keyword>
<keyword id="KW-0597">Phosphoprotein</keyword>
<keyword id="KW-0964">Secreted</keyword>
<keyword id="KW-0729">SH3-binding</keyword>
<keyword id="KW-0899">Viral immunoevasion</keyword>
<keyword id="KW-0946">Virion</keyword>
<keyword id="KW-0843">Virulence</keyword>
<proteinExistence type="evidence at protein level"/>
<name>NEF_HV1B1</name>
<reference key="1">
    <citation type="journal article" date="1985" name="Nature">
        <title>Complete nucleotide sequence of the AIDS virus, HTLV-III.</title>
        <authorList>
            <person name="Ratner L."/>
            <person name="Haseltine W.A."/>
            <person name="Patarca R."/>
            <person name="Livak K.J."/>
            <person name="Starcich B.R."/>
            <person name="Josephs S.F."/>
            <person name="Doran E.R."/>
            <person name="Rafalski J.A."/>
            <person name="Whitehorn E.A."/>
            <person name="Baumeister K."/>
            <person name="Ivanoff L."/>
            <person name="Petteway S.R. Jr."/>
            <person name="Pearson M.L."/>
            <person name="Lautenberger J.A."/>
            <person name="Papas T.S."/>
            <person name="Ghrayeb J."/>
            <person name="Chang N.T."/>
            <person name="Gallo R.C."/>
            <person name="Wong-Staal F."/>
        </authorList>
    </citation>
    <scope>NUCLEOTIDE SEQUENCE [GENOMIC RNA]</scope>
</reference>
<reference key="2">
    <citation type="journal article" date="1985" name="Nature">
        <title>Nucleic acid structure and expression of the human AIDS/lymphadenopathy retrovirus.</title>
        <authorList>
            <person name="Muesing M.A."/>
            <person name="Smith D.H."/>
            <person name="Cabradilla C.D."/>
            <person name="Benton C.V."/>
            <person name="Lasky L.A."/>
            <person name="Capon D.J."/>
        </authorList>
    </citation>
    <scope>NUCLEOTIDE SEQUENCE [GENOMIC DNA]</scope>
    <source>
        <strain>Isolate PV22</strain>
    </source>
</reference>
<reference key="3">
    <citation type="journal article" date="2001" name="Virology">
        <title>Rack1 binds HIV-1 Nef and can act as a Nef-protein kinase C adaptor.</title>
        <authorList>
            <person name="Gallina A."/>
            <person name="Rossi F."/>
            <person name="Milanesi G."/>
        </authorList>
    </citation>
    <scope>INTERACTION WITH HUMAN RACK1</scope>
</reference>
<reference key="4">
    <citation type="journal article" date="1997" name="Biochemistry">
        <title>Solution structure of a polypeptide from the N-terminus of the HIV protein Nef.</title>
        <authorList>
            <person name="Barnham K.J."/>
            <person name="Monks S.A."/>
            <person name="Hinds M.G."/>
            <person name="Azad A.A."/>
            <person name="Norton R.S."/>
        </authorList>
    </citation>
    <scope>STRUCTURE BY NMR OF 2-26</scope>
</reference>
<organism>
    <name type="scientific">Human immunodeficiency virus type 1 group M subtype B (isolate BH10)</name>
    <name type="common">HIV-1</name>
    <dbReference type="NCBI Taxonomy" id="11678"/>
    <lineage>
        <taxon>Viruses</taxon>
        <taxon>Riboviria</taxon>
        <taxon>Pararnavirae</taxon>
        <taxon>Artverviricota</taxon>
        <taxon>Revtraviricetes</taxon>
        <taxon>Ortervirales</taxon>
        <taxon>Retroviridae</taxon>
        <taxon>Orthoretrovirinae</taxon>
        <taxon>Lentivirus</taxon>
        <taxon>Human immunodeficiency virus type 1</taxon>
    </lineage>
</organism>
<feature type="initiator methionine" description="Removed; by host" evidence="1">
    <location>
        <position position="1"/>
    </location>
</feature>
<feature type="chain" id="PRO_0000038319" description="Protein Nef" evidence="1">
    <location>
        <begin position="2"/>
        <end position="206"/>
    </location>
</feature>
<feature type="chain" id="PRO_0000038320" description="C-terminal core protein" evidence="1">
    <location>
        <begin position="58"/>
        <end position="206"/>
    </location>
</feature>
<feature type="region of interest" description="Acidic; interacts with host PACS1 and PACS2; stabilizes the interaction of NEF/MHC-I with host AP1M1; necessary for MHC-I internalization" evidence="1">
    <location>
        <begin position="62"/>
        <end position="65"/>
    </location>
</feature>
<feature type="region of interest" description="SH3-binding; interaction with Src family tyrosine kinases" evidence="1">
    <location>
        <begin position="69"/>
        <end position="78"/>
    </location>
</feature>
<feature type="region of interest" description="Mediates dimerization, Nef-PTE1 interaction" evidence="1">
    <location>
        <begin position="108"/>
        <end position="124"/>
    </location>
</feature>
<feature type="region of interest" description="Binding to ATP6V1H" evidence="1">
    <location>
        <begin position="148"/>
        <end position="180"/>
    </location>
</feature>
<feature type="short sequence motif" description="PxxP; stabilizes the interaction of NEF/MHC-I with host AP1M1; necessary for MHC-I internalization" evidence="1">
    <location>
        <begin position="72"/>
        <end position="75"/>
    </location>
</feature>
<feature type="short sequence motif" description="Dileucine internalization motif; necessary for CD4 internalization" evidence="1">
    <location>
        <begin position="164"/>
        <end position="165"/>
    </location>
</feature>
<feature type="short sequence motif" description="Diacidic; necessary for CD4 internalization" evidence="1">
    <location>
        <begin position="174"/>
        <end position="175"/>
    </location>
</feature>
<feature type="site" description="Might play a role in AP-1 recruitment to the Nef-MHC-I complex" evidence="1">
    <location>
        <position position="20"/>
    </location>
</feature>
<feature type="site" description="Cleavage; by viral protease" evidence="1">
    <location>
        <begin position="57"/>
        <end position="58"/>
    </location>
</feature>
<feature type="modified residue" description="Phosphoserine; by host" evidence="1">
    <location>
        <position position="6"/>
    </location>
</feature>
<feature type="lipid moiety-binding region" description="N-myristoyl glycine; by host" evidence="1">
    <location>
        <position position="2"/>
    </location>
</feature>
<feature type="sequence variant" description="In strain: Isolate BH10.">
    <original>I</original>
    <variation>V</variation>
    <location>
        <position position="11"/>
    </location>
</feature>
<feature type="sequence variant" description="In strain: Isolate BH10.">
    <original>A</original>
    <variation>D</variation>
    <location>
        <position position="54"/>
    </location>
</feature>
<feature type="sequence variant" description="In strain: Isolate BH10.">
    <original>K</original>
    <variation>E</variation>
    <location>
        <position position="65"/>
    </location>
</feature>
<feature type="sequence variant" description="In strain: Isolate BH10.">
    <location>
        <begin position="124"/>
        <end position="206"/>
    </location>
</feature>
<feature type="helix" evidence="3">
    <location>
        <begin position="7"/>
        <end position="23"/>
    </location>
</feature>
<dbReference type="EMBL" id="M15654">
    <property type="protein sequence ID" value="AAA44206.1"/>
    <property type="molecule type" value="Genomic_RNA"/>
</dbReference>
<dbReference type="EMBL" id="K02083">
    <property type="protein sequence ID" value="AAB59874.1"/>
    <property type="molecule type" value="Genomic_DNA"/>
</dbReference>
<dbReference type="EMBL" id="X01762">
    <property type="status" value="NOT_ANNOTATED_CDS"/>
    <property type="molecule type" value="Genomic_RNA"/>
</dbReference>
<dbReference type="PIR" id="A04005">
    <property type="entry name" value="ASLJH3"/>
</dbReference>
<dbReference type="PIR" id="A04007">
    <property type="entry name" value="ASLJVL"/>
</dbReference>
<dbReference type="PDB" id="1ZEC">
    <property type="method" value="NMR"/>
    <property type="chains" value="A=2-26"/>
</dbReference>
<dbReference type="PDB" id="3TB8">
    <property type="method" value="X-ray"/>
    <property type="resolution" value="3.71 A"/>
    <property type="chains" value="A=2-206"/>
</dbReference>
<dbReference type="PDBsum" id="1ZEC"/>
<dbReference type="PDBsum" id="3TB8"/>
<dbReference type="BMRB" id="P03404"/>
<dbReference type="SMR" id="P03404"/>
<dbReference type="EvolutionaryTrace" id="P03404"/>
<dbReference type="Proteomes" id="UP000007690">
    <property type="component" value="Genome"/>
</dbReference>
<dbReference type="Proteomes" id="UP000107234">
    <property type="component" value="Genome"/>
</dbReference>
<dbReference type="Proteomes" id="UP000126245">
    <property type="component" value="Genome"/>
</dbReference>
<dbReference type="GO" id="GO:0005576">
    <property type="term" value="C:extracellular region"/>
    <property type="evidence" value="ECO:0007669"/>
    <property type="project" value="UniProtKB-SubCell"/>
</dbReference>
<dbReference type="GO" id="GO:0044178">
    <property type="term" value="C:host cell Golgi membrane"/>
    <property type="evidence" value="ECO:0007669"/>
    <property type="project" value="UniProtKB-SubCell"/>
</dbReference>
<dbReference type="GO" id="GO:0020002">
    <property type="term" value="C:host cell plasma membrane"/>
    <property type="evidence" value="ECO:0007669"/>
    <property type="project" value="UniProtKB-SubCell"/>
</dbReference>
<dbReference type="GO" id="GO:0016020">
    <property type="term" value="C:membrane"/>
    <property type="evidence" value="ECO:0007669"/>
    <property type="project" value="UniProtKB-UniRule"/>
</dbReference>
<dbReference type="GO" id="GO:0044423">
    <property type="term" value="C:virion component"/>
    <property type="evidence" value="ECO:0007669"/>
    <property type="project" value="UniProtKB-UniRule"/>
</dbReference>
<dbReference type="GO" id="GO:0051117">
    <property type="term" value="F:ATPase binding"/>
    <property type="evidence" value="ECO:0000250"/>
    <property type="project" value="UniProtKB"/>
</dbReference>
<dbReference type="GO" id="GO:0042609">
    <property type="term" value="F:CD4 receptor binding"/>
    <property type="evidence" value="ECO:0000250"/>
    <property type="project" value="UniProtKB"/>
</dbReference>
<dbReference type="GO" id="GO:0005525">
    <property type="term" value="F:GTP binding"/>
    <property type="evidence" value="ECO:0007669"/>
    <property type="project" value="UniProtKB-UniRule"/>
</dbReference>
<dbReference type="GO" id="GO:0042288">
    <property type="term" value="F:MHC class I protein binding"/>
    <property type="evidence" value="ECO:0000250"/>
    <property type="project" value="UniProtKB"/>
</dbReference>
<dbReference type="GO" id="GO:0019901">
    <property type="term" value="F:protein kinase binding"/>
    <property type="evidence" value="ECO:0000250"/>
    <property type="project" value="UniProtKB"/>
</dbReference>
<dbReference type="GO" id="GO:0017124">
    <property type="term" value="F:SH3 domain binding"/>
    <property type="evidence" value="ECO:0007669"/>
    <property type="project" value="UniProtKB-UniRule"/>
</dbReference>
<dbReference type="GO" id="GO:0005102">
    <property type="term" value="F:signaling receptor binding"/>
    <property type="evidence" value="ECO:0000250"/>
    <property type="project" value="UniProtKB"/>
</dbReference>
<dbReference type="GO" id="GO:0031996">
    <property type="term" value="F:thioesterase binding"/>
    <property type="evidence" value="ECO:0000250"/>
    <property type="project" value="UniProtKB"/>
</dbReference>
<dbReference type="GO" id="GO:0010561">
    <property type="term" value="P:negative regulation of glycoprotein biosynthetic process"/>
    <property type="evidence" value="ECO:0000250"/>
    <property type="project" value="UniProtKB"/>
</dbReference>
<dbReference type="GO" id="GO:0050848">
    <property type="term" value="P:regulation of calcium-mediated signaling"/>
    <property type="evidence" value="ECO:0000250"/>
    <property type="project" value="UniProtKB"/>
</dbReference>
<dbReference type="GO" id="GO:0046776">
    <property type="term" value="P:symbiont-mediated suppression of host antigen processing and presentation of peptide antigen via MHC class I"/>
    <property type="evidence" value="ECO:0000250"/>
    <property type="project" value="UniProtKB"/>
</dbReference>
<dbReference type="GO" id="GO:0039505">
    <property type="term" value="P:symbiont-mediated suppression of host antigen processing and presentation of peptide antigen via MHC class II"/>
    <property type="evidence" value="ECO:0007669"/>
    <property type="project" value="UniProtKB-UniRule"/>
</dbReference>
<dbReference type="GO" id="GO:0033668">
    <property type="term" value="P:symbiont-mediated suppression of host apoptosis"/>
    <property type="evidence" value="ECO:0000250"/>
    <property type="project" value="UniProtKB"/>
</dbReference>
<dbReference type="GO" id="GO:0140321">
    <property type="term" value="P:symbiont-mediated suppression of host autophagy"/>
    <property type="evidence" value="ECO:0007669"/>
    <property type="project" value="UniProtKB-KW"/>
</dbReference>
<dbReference type="GO" id="GO:0052170">
    <property type="term" value="P:symbiont-mediated suppression of host innate immune response"/>
    <property type="evidence" value="ECO:0000250"/>
    <property type="project" value="UniProtKB"/>
</dbReference>
<dbReference type="GO" id="GO:0019058">
    <property type="term" value="P:viral life cycle"/>
    <property type="evidence" value="ECO:0000250"/>
    <property type="project" value="UniProtKB"/>
</dbReference>
<dbReference type="DisProt" id="DP01843"/>
<dbReference type="FunFam" id="3.30.62.10:FF:000001">
    <property type="entry name" value="Protein Nef"/>
    <property type="match status" value="1"/>
</dbReference>
<dbReference type="FunFam" id="4.10.890.10:FF:000001">
    <property type="entry name" value="Protein Nef"/>
    <property type="match status" value="1"/>
</dbReference>
<dbReference type="Gene3D" id="4.10.890.10">
    <property type="entry name" value="HIV 1 nef anchor domain"/>
    <property type="match status" value="1"/>
</dbReference>
<dbReference type="Gene3D" id="3.30.62.10">
    <property type="entry name" value="Nef Regulatory Factor"/>
    <property type="match status" value="1"/>
</dbReference>
<dbReference type="HAMAP" id="MF_04078">
    <property type="entry name" value="NEF_HIV"/>
    <property type="match status" value="1"/>
</dbReference>
<dbReference type="IDEAL" id="IID90017"/>
<dbReference type="InterPro" id="IPR027480">
    <property type="entry name" value="HIV-1_Nef_anchor_sf"/>
</dbReference>
<dbReference type="InterPro" id="IPR027481">
    <property type="entry name" value="HIV-1_Nef_core_sf"/>
</dbReference>
<dbReference type="InterPro" id="IPR001558">
    <property type="entry name" value="HIV_Nef"/>
</dbReference>
<dbReference type="Pfam" id="PF00469">
    <property type="entry name" value="F-protein"/>
    <property type="match status" value="1"/>
</dbReference>
<dbReference type="SUPFAM" id="SSF55671">
    <property type="entry name" value="Regulatory factor Nef"/>
    <property type="match status" value="1"/>
</dbReference>
<gene>
    <name evidence="1" type="primary">nef</name>
</gene>
<sequence length="206" mass="23352">MGGKWSKSSVIGWPAVRERMRRAEPAADGVGAASRDLEKHGAITSSNTAANNAACAWLEAQEEEKVGFPVTPQVPLRPMTYKAAVDLSHFLKEKGGLEGLIHSQRRQDILDLWIYHTQGYFPDWQNYTPGPGIRYPLTFGWCYKLVPVEPDKVEEANKGENTSLLHPVSLHGMDDPEREVLEWRFDSRLAFHHVARELHPEYFKNC</sequence>
<protein>
    <recommendedName>
        <fullName evidence="1">Protein Nef</fullName>
    </recommendedName>
    <alternativeName>
        <fullName evidence="1">3'ORF</fullName>
    </alternativeName>
    <alternativeName>
        <fullName evidence="1">Negative factor</fullName>
        <shortName evidence="1">F-protein</shortName>
    </alternativeName>
    <component>
        <recommendedName>
            <fullName evidence="1">C-terminal core protein</fullName>
        </recommendedName>
    </component>
</protein>
<accession>P03404</accession>
<accession>P03405</accession>
<comment type="function">
    <text evidence="1">Factor of infectivity and pathogenicity, required for optimal virus replication. Alters numerous pathways of T-lymphocyte function and down-regulates immunity surface molecules in order to evade host defense and increase viral infectivity. Alters the functionality of other immunity cells, like dendritic cells, monocytes/macrophages and NK cells.</text>
</comment>
<comment type="function">
    <text evidence="1">In infected CD4(+) T-lymphocytes, down-regulates the surface MHC-I, mature MHC-II, CD4, CD28, CCR5 and CXCR4 molecules. Mediates internalization and degradation of host CD4 through the interaction of with the cytoplasmic tail of CD4, the recruitment of AP-2 (clathrin adapter protein complex 2), internalization through clathrin coated pits, and subsequent transport to endosomes and lysosomes for degradation. Diverts host MHC-I molecules to the trans-Golgi network-associated endosomal compartments by an endocytic pathway to finally target them for degradation. MHC-I down-regulation may involve AP-1 (clathrin adapter protein complex 1) or possibly Src family kinase-ZAP70/Syk-PI3K cascade recruited by PACS2. In consequence infected cells are masked for immune recognition by cytotoxic T-lymphocytes. Decreasing the number of immune receptors also prevents reinfection by more HIV particles (superinfection). Down-regulates host SERINC3 and SERINC5 thereby excluding these proteins from the viral particles. Virion infectivity is drastically higher when SERINC3 or SERINC5 are excluded from the viral envelope, because these host antiviral proteins impair the membrane fusion event necessary for subsequent virion penetration.</text>
</comment>
<comment type="function">
    <text evidence="1">Bypasses host T-cell signaling by inducing a transcriptional program nearly identical to that of anti-CD3 cell activation. Interaction with TCR-zeta chain up-regulates the Fas ligand (FasL). Increasing surface FasL molecules and decreasing surface MHC-I molecules on infected CD4(+) cells send attacking cytotoxic CD8+ T-lymphocytes into apoptosis.</text>
</comment>
<comment type="function">
    <text evidence="1">Plays a role in optimizing the host cell environment for viral replication without causing cell death by apoptosis. Protects the infected cells from apoptosis in order to keep them alive until the next virus generation is ready to strike. Inhibits the Fas and TNFR-mediated death signals by blocking MAP3K5/ASK1. Decreases the half-life of TP53, protecting the infected cell against p53-mediated apoptosis. Inhibits the apoptotic signals regulated by the Bcl-2 family proteins through the formation of a Nef/PI3-kinase/PAK2 complex that leads to activation of PAK2 and induces phosphorylation of host BAD.</text>
</comment>
<comment type="function">
    <text evidence="1">Extracellular Nef protein targets CD4(+) T-lymphocytes for apoptosis by interacting with CXCR4 surface receptors.</text>
</comment>
<comment type="subunit">
    <text evidence="1 2">Monomer; cytosolic form. Homodimer; membrane bound form. Interacts with Nef associated p21-activated kinase (PAK2); this interaction activates PAK2. Associates with the Nef-MHC-I-AP1 complex; this complex is required for MHC-I internalization. Interacts (via C-terminus) with host PI3-kinase. Interacts with host PACS1; this interaction seems to be weak. Interacts with host PACS2. Interacts with host LCK and MAPK3; these interactions inhibit the kinase activity of the latter. Interacts with host ATP6V1H; this interaction may play a role in CD4 endocytosis. Associates with the CD4-Nef-AP2 complex; this complex is required for CD4 internalization. Interacts with host AP2 subunit alpha and AP2 subunit sigma2. Interacts with TCR-zeta chain; this interaction up-regulates the Fas ligand (FasL) surface expression. Interacts with host HCK, LYN, and SRC; these interactions activate the Src family kinases. Interacts with MAP3K5; this interaction inhibits the Fas and TNFR-mediated death signals. Interacts with beta-COP and PTE1. Interacts with human RACK1; this increases Nef phosphorylation by PKC. Interacts with TP53; this interaction decreases the half-life of TP53, protecting the infected cell against p53-mediated apoptosis.</text>
</comment>
<comment type="subcellular location">
    <subcellularLocation>
        <location evidence="1">Host cell membrane</location>
        <topology evidence="1">Lipid-anchor</topology>
        <orientation evidence="1">Cytoplasmic side</orientation>
    </subcellularLocation>
    <subcellularLocation>
        <location evidence="1">Virion</location>
    </subcellularLocation>
    <subcellularLocation>
        <location evidence="1">Secreted</location>
    </subcellularLocation>
    <subcellularLocation>
        <location evidence="1">Host Golgi apparatus membrane</location>
    </subcellularLocation>
    <text evidence="1">TGN localization requires PACS1. Associates with the inner plasma membrane through its N-terminal domain. Nef stimulates its own export via the release of exosomes. Incorporated in virions at a rate of about 10 molecules per virion, where it is cleaved.</text>
</comment>
<comment type="induction">
    <text evidence="1">Expressed early in the viral replication cycle.</text>
</comment>
<comment type="domain">
    <text evidence="1">The N-terminal domain is composed of the N-myristoyl glycine and of a cluster of positively charged amino acids. It is required for inner plasma membrane targeting of Nef and virion incorporation, and thereby for infectivity. This domain is also involved in binding to TP53.</text>
</comment>
<comment type="domain">
    <text evidence="1">The SH3-binding domain constituted of PxxP motifs mediates binding to several Src family proteins thereby regulating their tyrosine kinase activity. The same motifs also mediates the association with MAPK3, PI3-kinase and TCR-zeta.</text>
</comment>
<comment type="domain">
    <text evidence="1">The dileucine internalization motif and a diacidic motif seem to be required for binding to AP-2.</text>
</comment>
<comment type="domain">
    <text evidence="1">The acidic region binds to the sorting protein PACS-2, which targets Nef to the paranuclear region, enabling the PxxP motif to direct assembly of an SFK/ZAP-70/PI3K complex that accelerates endocytosis of cell-surface MHC-I.</text>
</comment>
<comment type="PTM">
    <text evidence="1">The virion-associated Nef proteins are cleaved by the viral protease to release the soluble C-terminal core protein. Nef is probably cleaved concomitantly with viral structural proteins on maturation of virus particles.</text>
</comment>
<comment type="PTM">
    <text evidence="1">Myristoylated.</text>
</comment>
<comment type="PTM">
    <text evidence="1">Phosphorylated on serine residues, probably by host PKCdelta and theta.</text>
</comment>
<comment type="miscellaneous">
    <text evidence="1">HIV-1 lineages are divided in three main groups, M (for Major), O (for Outlier), and N (for New, or Non-M, Non-O). The vast majority of strains found worldwide belong to the group M. Group O seems to be endemic to and largely confined to Cameroon and neighboring countries in West Central Africa, where these viruses represent a small minority of HIV-1 strains. The group N is represented by a limited number of isolates from Cameroonian persons. The group M is further subdivided in 9 clades or subtypes (A to D, F to H, J and K).</text>
</comment>
<comment type="similarity">
    <text evidence="1">Belongs to the lentivirus primate group Nef protein family.</text>
</comment>